<evidence type="ECO:0000255" key="1">
    <source>
        <dbReference type="HAMAP-Rule" id="MF_00440"/>
    </source>
</evidence>
<dbReference type="EMBL" id="CP001186">
    <property type="protein sequence ID" value="ACK94437.1"/>
    <property type="molecule type" value="Genomic_DNA"/>
</dbReference>
<dbReference type="RefSeq" id="WP_001203687.1">
    <property type="nucleotide sequence ID" value="NC_011772.1"/>
</dbReference>
<dbReference type="SMR" id="B7IJX8"/>
<dbReference type="GeneID" id="93006530"/>
<dbReference type="KEGG" id="bcg:BCG9842_B0548"/>
<dbReference type="HOGENOM" id="CLU_108412_0_0_9"/>
<dbReference type="Proteomes" id="UP000006744">
    <property type="component" value="Chromosome"/>
</dbReference>
<dbReference type="GO" id="GO:0005524">
    <property type="term" value="F:ATP binding"/>
    <property type="evidence" value="ECO:0007669"/>
    <property type="project" value="UniProtKB-KW"/>
</dbReference>
<dbReference type="GO" id="GO:0003677">
    <property type="term" value="F:DNA binding"/>
    <property type="evidence" value="ECO:0007669"/>
    <property type="project" value="UniProtKB-KW"/>
</dbReference>
<dbReference type="GO" id="GO:0008270">
    <property type="term" value="F:zinc ion binding"/>
    <property type="evidence" value="ECO:0007669"/>
    <property type="project" value="UniProtKB-UniRule"/>
</dbReference>
<dbReference type="GO" id="GO:0045892">
    <property type="term" value="P:negative regulation of DNA-templated transcription"/>
    <property type="evidence" value="ECO:0007669"/>
    <property type="project" value="UniProtKB-UniRule"/>
</dbReference>
<dbReference type="HAMAP" id="MF_00440">
    <property type="entry name" value="NrdR"/>
    <property type="match status" value="1"/>
</dbReference>
<dbReference type="InterPro" id="IPR005144">
    <property type="entry name" value="ATP-cone_dom"/>
</dbReference>
<dbReference type="InterPro" id="IPR055173">
    <property type="entry name" value="NrdR-like_N"/>
</dbReference>
<dbReference type="InterPro" id="IPR003796">
    <property type="entry name" value="RNR_NrdR-like"/>
</dbReference>
<dbReference type="NCBIfam" id="TIGR00244">
    <property type="entry name" value="transcriptional regulator NrdR"/>
    <property type="match status" value="1"/>
</dbReference>
<dbReference type="PANTHER" id="PTHR30455">
    <property type="entry name" value="TRANSCRIPTIONAL REPRESSOR NRDR"/>
    <property type="match status" value="1"/>
</dbReference>
<dbReference type="PANTHER" id="PTHR30455:SF2">
    <property type="entry name" value="TRANSCRIPTIONAL REPRESSOR NRDR"/>
    <property type="match status" value="1"/>
</dbReference>
<dbReference type="Pfam" id="PF03477">
    <property type="entry name" value="ATP-cone"/>
    <property type="match status" value="1"/>
</dbReference>
<dbReference type="Pfam" id="PF22811">
    <property type="entry name" value="Zn_ribbon_NrdR"/>
    <property type="match status" value="1"/>
</dbReference>
<dbReference type="PROSITE" id="PS51161">
    <property type="entry name" value="ATP_CONE"/>
    <property type="match status" value="1"/>
</dbReference>
<protein>
    <recommendedName>
        <fullName evidence="1">Transcriptional repressor NrdR</fullName>
    </recommendedName>
</protein>
<accession>B7IJX8</accession>
<sequence>MRCPSCSHNGTRVLDSRPVDEGRSIRRRRECESCLSRFTTFERVEESPLIVVKKEGTREEFNKEKILRGLIKACEKRPVSLRQLEEVTQSVERELRNLGISEVKSDMIGEIVMEELRDIDDVAYVRFASVYRQFKDLNVFIEELKDILQKERE</sequence>
<reference key="1">
    <citation type="submission" date="2008-10" db="EMBL/GenBank/DDBJ databases">
        <title>Genome sequence of Bacillus cereus G9842.</title>
        <authorList>
            <person name="Dodson R.J."/>
            <person name="Durkin A.S."/>
            <person name="Rosovitz M.J."/>
            <person name="Rasko D.A."/>
            <person name="Hoffmaster A."/>
            <person name="Ravel J."/>
            <person name="Sutton G."/>
        </authorList>
    </citation>
    <scope>NUCLEOTIDE SEQUENCE [LARGE SCALE GENOMIC DNA]</scope>
    <source>
        <strain>G9842</strain>
    </source>
</reference>
<proteinExistence type="inferred from homology"/>
<organism>
    <name type="scientific">Bacillus cereus (strain G9842)</name>
    <dbReference type="NCBI Taxonomy" id="405531"/>
    <lineage>
        <taxon>Bacteria</taxon>
        <taxon>Bacillati</taxon>
        <taxon>Bacillota</taxon>
        <taxon>Bacilli</taxon>
        <taxon>Bacillales</taxon>
        <taxon>Bacillaceae</taxon>
        <taxon>Bacillus</taxon>
        <taxon>Bacillus cereus group</taxon>
    </lineage>
</organism>
<feature type="chain" id="PRO_1000124467" description="Transcriptional repressor NrdR">
    <location>
        <begin position="1"/>
        <end position="153"/>
    </location>
</feature>
<feature type="domain" description="ATP-cone" evidence="1">
    <location>
        <begin position="49"/>
        <end position="139"/>
    </location>
</feature>
<feature type="zinc finger region" evidence="1">
    <location>
        <begin position="3"/>
        <end position="34"/>
    </location>
</feature>
<gene>
    <name evidence="1" type="primary">nrdR</name>
    <name type="ordered locus">BCG9842_B0548</name>
</gene>
<comment type="function">
    <text evidence="1">Negatively regulates transcription of bacterial ribonucleotide reductase nrd genes and operons by binding to NrdR-boxes.</text>
</comment>
<comment type="cofactor">
    <cofactor evidence="1">
        <name>Zn(2+)</name>
        <dbReference type="ChEBI" id="CHEBI:29105"/>
    </cofactor>
    <text evidence="1">Binds 1 zinc ion.</text>
</comment>
<comment type="similarity">
    <text evidence="1">Belongs to the NrdR family.</text>
</comment>
<keyword id="KW-0067">ATP-binding</keyword>
<keyword id="KW-0238">DNA-binding</keyword>
<keyword id="KW-0479">Metal-binding</keyword>
<keyword id="KW-0547">Nucleotide-binding</keyword>
<keyword id="KW-0678">Repressor</keyword>
<keyword id="KW-0804">Transcription</keyword>
<keyword id="KW-0805">Transcription regulation</keyword>
<keyword id="KW-0862">Zinc</keyword>
<keyword id="KW-0863">Zinc-finger</keyword>
<name>NRDR_BACC2</name>